<proteinExistence type="inferred from homology"/>
<feature type="chain" id="PRO_1000200164" description="MEMO1 family protein CTN_0605">
    <location>
        <begin position="1"/>
        <end position="277"/>
    </location>
</feature>
<protein>
    <recommendedName>
        <fullName evidence="1">MEMO1 family protein CTN_0605</fullName>
    </recommendedName>
</protein>
<sequence length="277" mass="30640">MIREPVVAGLFYPSRKDELIEQIRICFLDRRIGPGELPGPVEKNLQNPVGLVSPHAGYIYSGPVAAWGFLEVARIGKPSLVVIIGPNHTGLGKPVGIWPEGFWETPLGRVPVNEEAVEILLNSSRYAEEDTLSHLKEHSIEVQLPFLQFVFGDFSIVPVCLMDQSPTVAEDLAFAVRELMKSFRNVLIIASTDLNHYEDQKTTLKKDYLVVEAIEKRDSRLLYEYLVKEDISMCGYGGVAVLLNLGFSSVRILKHATSGDVSGDTLEVVGYLSAILS</sequence>
<name>Y605_THENN</name>
<accession>B9K748</accession>
<evidence type="ECO:0000255" key="1">
    <source>
        <dbReference type="HAMAP-Rule" id="MF_00055"/>
    </source>
</evidence>
<gene>
    <name type="ordered locus">CTN_0605</name>
</gene>
<comment type="similarity">
    <text evidence="1">Belongs to the MEMO1 family.</text>
</comment>
<reference key="1">
    <citation type="submission" date="2007-11" db="EMBL/GenBank/DDBJ databases">
        <title>The genome sequence of the hyperthermophilic bacterium Thermotoga neapolitana.</title>
        <authorList>
            <person name="Lim S.K."/>
            <person name="Kim J.S."/>
            <person name="Cha S.H."/>
            <person name="Park B.C."/>
            <person name="Lee D.S."/>
            <person name="Tae H.S."/>
            <person name="Kim S.-J."/>
            <person name="Kim J.J."/>
            <person name="Park K.J."/>
            <person name="Lee S.Y."/>
        </authorList>
    </citation>
    <scope>NUCLEOTIDE SEQUENCE [LARGE SCALE GENOMIC DNA]</scope>
    <source>
        <strain>ATCC 49049 / DSM 4359 / NBRC 107923 / NS-E</strain>
    </source>
</reference>
<organism>
    <name type="scientific">Thermotoga neapolitana (strain ATCC 49049 / DSM 4359 / NBRC 107923 / NS-E)</name>
    <dbReference type="NCBI Taxonomy" id="309803"/>
    <lineage>
        <taxon>Bacteria</taxon>
        <taxon>Thermotogati</taxon>
        <taxon>Thermotogota</taxon>
        <taxon>Thermotogae</taxon>
        <taxon>Thermotogales</taxon>
        <taxon>Thermotogaceae</taxon>
        <taxon>Thermotoga</taxon>
    </lineage>
</organism>
<dbReference type="EMBL" id="CP000916">
    <property type="protein sequence ID" value="ACM22781.1"/>
    <property type="molecule type" value="Genomic_DNA"/>
</dbReference>
<dbReference type="RefSeq" id="WP_015919100.1">
    <property type="nucleotide sequence ID" value="NC_011978.1"/>
</dbReference>
<dbReference type="SMR" id="B9K748"/>
<dbReference type="STRING" id="309803.CTN_0605"/>
<dbReference type="KEGG" id="tna:CTN_0605"/>
<dbReference type="eggNOG" id="COG1355">
    <property type="taxonomic scope" value="Bacteria"/>
</dbReference>
<dbReference type="HOGENOM" id="CLU_038085_2_0_0"/>
<dbReference type="Proteomes" id="UP000000445">
    <property type="component" value="Chromosome"/>
</dbReference>
<dbReference type="CDD" id="cd07361">
    <property type="entry name" value="MEMO_like"/>
    <property type="match status" value="1"/>
</dbReference>
<dbReference type="Gene3D" id="3.40.830.10">
    <property type="entry name" value="LigB-like"/>
    <property type="match status" value="1"/>
</dbReference>
<dbReference type="HAMAP" id="MF_00055">
    <property type="entry name" value="MEMO1"/>
    <property type="match status" value="1"/>
</dbReference>
<dbReference type="InterPro" id="IPR002737">
    <property type="entry name" value="MEMO1_fam"/>
</dbReference>
<dbReference type="NCBIfam" id="TIGR04336">
    <property type="entry name" value="AmmeMemoSam_B"/>
    <property type="match status" value="1"/>
</dbReference>
<dbReference type="PANTHER" id="PTHR11060">
    <property type="entry name" value="PROTEIN MEMO1"/>
    <property type="match status" value="1"/>
</dbReference>
<dbReference type="PANTHER" id="PTHR11060:SF0">
    <property type="entry name" value="PROTEIN MEMO1"/>
    <property type="match status" value="1"/>
</dbReference>
<dbReference type="Pfam" id="PF01875">
    <property type="entry name" value="Memo"/>
    <property type="match status" value="1"/>
</dbReference>